<proteinExistence type="inferred from homology"/>
<gene>
    <name evidence="1" type="primary">ffh</name>
    <name type="ordered locus">RP173</name>
</gene>
<accession>Q9ZDZ0</accession>
<organism>
    <name type="scientific">Rickettsia prowazekii (strain Madrid E)</name>
    <dbReference type="NCBI Taxonomy" id="272947"/>
    <lineage>
        <taxon>Bacteria</taxon>
        <taxon>Pseudomonadati</taxon>
        <taxon>Pseudomonadota</taxon>
        <taxon>Alphaproteobacteria</taxon>
        <taxon>Rickettsiales</taxon>
        <taxon>Rickettsiaceae</taxon>
        <taxon>Rickettsieae</taxon>
        <taxon>Rickettsia</taxon>
        <taxon>typhus group</taxon>
    </lineage>
</organism>
<dbReference type="EC" id="3.6.5.4" evidence="1"/>
<dbReference type="EMBL" id="AJ235270">
    <property type="protein sequence ID" value="CAA14640.1"/>
    <property type="molecule type" value="Genomic_DNA"/>
</dbReference>
<dbReference type="PIR" id="A71728">
    <property type="entry name" value="A71728"/>
</dbReference>
<dbReference type="RefSeq" id="NP_220563.1">
    <property type="nucleotide sequence ID" value="NC_000963.1"/>
</dbReference>
<dbReference type="RefSeq" id="WP_004598617.1">
    <property type="nucleotide sequence ID" value="NC_000963.1"/>
</dbReference>
<dbReference type="SMR" id="Q9ZDZ0"/>
<dbReference type="STRING" id="272947.gene:17555256"/>
<dbReference type="EnsemblBacteria" id="CAA14640">
    <property type="protein sequence ID" value="CAA14640"/>
    <property type="gene ID" value="CAA14640"/>
</dbReference>
<dbReference type="GeneID" id="57569301"/>
<dbReference type="KEGG" id="rpr:RP173"/>
<dbReference type="PATRIC" id="fig|272947.5.peg.178"/>
<dbReference type="eggNOG" id="COG0541">
    <property type="taxonomic scope" value="Bacteria"/>
</dbReference>
<dbReference type="HOGENOM" id="CLU_009301_6_0_5"/>
<dbReference type="OrthoDB" id="9804720at2"/>
<dbReference type="Proteomes" id="UP000002480">
    <property type="component" value="Chromosome"/>
</dbReference>
<dbReference type="GO" id="GO:0048500">
    <property type="term" value="C:signal recognition particle"/>
    <property type="evidence" value="ECO:0007669"/>
    <property type="project" value="UniProtKB-UniRule"/>
</dbReference>
<dbReference type="GO" id="GO:0008312">
    <property type="term" value="F:7S RNA binding"/>
    <property type="evidence" value="ECO:0007669"/>
    <property type="project" value="InterPro"/>
</dbReference>
<dbReference type="GO" id="GO:0016887">
    <property type="term" value="F:ATP hydrolysis activity"/>
    <property type="evidence" value="ECO:0007669"/>
    <property type="project" value="InterPro"/>
</dbReference>
<dbReference type="GO" id="GO:0005525">
    <property type="term" value="F:GTP binding"/>
    <property type="evidence" value="ECO:0007669"/>
    <property type="project" value="UniProtKB-UniRule"/>
</dbReference>
<dbReference type="GO" id="GO:0003924">
    <property type="term" value="F:GTPase activity"/>
    <property type="evidence" value="ECO:0007669"/>
    <property type="project" value="UniProtKB-UniRule"/>
</dbReference>
<dbReference type="GO" id="GO:0006614">
    <property type="term" value="P:SRP-dependent cotranslational protein targeting to membrane"/>
    <property type="evidence" value="ECO:0007669"/>
    <property type="project" value="InterPro"/>
</dbReference>
<dbReference type="CDD" id="cd18539">
    <property type="entry name" value="SRP_G"/>
    <property type="match status" value="1"/>
</dbReference>
<dbReference type="Gene3D" id="3.40.50.300">
    <property type="entry name" value="P-loop containing nucleotide triphosphate hydrolases"/>
    <property type="match status" value="1"/>
</dbReference>
<dbReference type="Gene3D" id="1.20.120.140">
    <property type="entry name" value="Signal recognition particle SRP54, nucleotide-binding domain"/>
    <property type="match status" value="1"/>
</dbReference>
<dbReference type="Gene3D" id="1.10.260.30">
    <property type="entry name" value="Signal recognition particle, SRP54 subunit, M-domain"/>
    <property type="match status" value="1"/>
</dbReference>
<dbReference type="HAMAP" id="MF_00306">
    <property type="entry name" value="SRP54"/>
    <property type="match status" value="1"/>
</dbReference>
<dbReference type="InterPro" id="IPR003593">
    <property type="entry name" value="AAA+_ATPase"/>
</dbReference>
<dbReference type="InterPro" id="IPR027417">
    <property type="entry name" value="P-loop_NTPase"/>
</dbReference>
<dbReference type="InterPro" id="IPR036891">
    <property type="entry name" value="Signal_recog_part_SRP54_M_sf"/>
</dbReference>
<dbReference type="InterPro" id="IPR013822">
    <property type="entry name" value="Signal_recog_particl_SRP54_hlx"/>
</dbReference>
<dbReference type="InterPro" id="IPR004125">
    <property type="entry name" value="Signal_recog_particle_SRP54_M"/>
</dbReference>
<dbReference type="InterPro" id="IPR004780">
    <property type="entry name" value="SRP"/>
</dbReference>
<dbReference type="InterPro" id="IPR036225">
    <property type="entry name" value="SRP/SRP_N"/>
</dbReference>
<dbReference type="InterPro" id="IPR022941">
    <property type="entry name" value="SRP54"/>
</dbReference>
<dbReference type="InterPro" id="IPR000897">
    <property type="entry name" value="SRP54_GTPase_dom"/>
</dbReference>
<dbReference type="InterPro" id="IPR042101">
    <property type="entry name" value="SRP54_N_sf"/>
</dbReference>
<dbReference type="NCBIfam" id="TIGR00959">
    <property type="entry name" value="ffh"/>
    <property type="match status" value="1"/>
</dbReference>
<dbReference type="PANTHER" id="PTHR11564">
    <property type="entry name" value="SIGNAL RECOGNITION PARTICLE 54K PROTEIN SRP54"/>
    <property type="match status" value="1"/>
</dbReference>
<dbReference type="PANTHER" id="PTHR11564:SF5">
    <property type="entry name" value="SIGNAL RECOGNITION PARTICLE SUBUNIT SRP54"/>
    <property type="match status" value="1"/>
</dbReference>
<dbReference type="Pfam" id="PF00448">
    <property type="entry name" value="SRP54"/>
    <property type="match status" value="1"/>
</dbReference>
<dbReference type="Pfam" id="PF02881">
    <property type="entry name" value="SRP54_N"/>
    <property type="match status" value="1"/>
</dbReference>
<dbReference type="Pfam" id="PF02978">
    <property type="entry name" value="SRP_SPB"/>
    <property type="match status" value="1"/>
</dbReference>
<dbReference type="SMART" id="SM00382">
    <property type="entry name" value="AAA"/>
    <property type="match status" value="1"/>
</dbReference>
<dbReference type="SMART" id="SM00962">
    <property type="entry name" value="SRP54"/>
    <property type="match status" value="1"/>
</dbReference>
<dbReference type="SMART" id="SM00963">
    <property type="entry name" value="SRP54_N"/>
    <property type="match status" value="1"/>
</dbReference>
<dbReference type="SUPFAM" id="SSF47364">
    <property type="entry name" value="Domain of the SRP/SRP receptor G-proteins"/>
    <property type="match status" value="1"/>
</dbReference>
<dbReference type="SUPFAM" id="SSF52540">
    <property type="entry name" value="P-loop containing nucleoside triphosphate hydrolases"/>
    <property type="match status" value="1"/>
</dbReference>
<dbReference type="SUPFAM" id="SSF47446">
    <property type="entry name" value="Signal peptide-binding domain"/>
    <property type="match status" value="1"/>
</dbReference>
<dbReference type="PROSITE" id="PS00300">
    <property type="entry name" value="SRP54"/>
    <property type="match status" value="1"/>
</dbReference>
<name>SRP54_RICPR</name>
<evidence type="ECO:0000255" key="1">
    <source>
        <dbReference type="HAMAP-Rule" id="MF_00306"/>
    </source>
</evidence>
<keyword id="KW-0963">Cytoplasm</keyword>
<keyword id="KW-0342">GTP-binding</keyword>
<keyword id="KW-0378">Hydrolase</keyword>
<keyword id="KW-0547">Nucleotide-binding</keyword>
<keyword id="KW-1185">Reference proteome</keyword>
<keyword id="KW-0687">Ribonucleoprotein</keyword>
<keyword id="KW-0694">RNA-binding</keyword>
<keyword id="KW-0733">Signal recognition particle</keyword>
<sequence length="449" mass="49280">MFKTLTQNLTKIFDKLVNSGILTENQIDTAMRDVRVALLESDVALPVIKGFIEEVKQKALGQEVIKSVSPGQMIIKIIHEEMINLLASTESTTKLNLNAKPPVNLLIVGLQGGGKTTASGKLALRLKNQNKKVLLVSLDTYRPAAQEQLAIIANSVNIDSLPIVKGEKPLDIVKRAIGEAQISAYDVVIYDTAGRIQIDNVMMEEALAIKKILNPTETLLVIDSMTGQDAVITAKTFSEKLEISGLILSRIDGDTKGGAALSVKYFTQKPIKFLSSGEKLTDLEEFNAERLASRILDMGDIISFVKKAASIVDREEAEKTAIKLKSGKFDLNDYLQQMRSIKKMGGFGSILSMLPGSGKIFDQIDQSKLNSKIIEHQEAIILSMTLKERKNPDIINASRRKRIAAGAGMTVQKVNILLKQYKQISAVMKKTSKMNPKNLLRSGIGKLFS</sequence>
<feature type="chain" id="PRO_0000101166" description="Signal recognition particle protein">
    <location>
        <begin position="1"/>
        <end position="449"/>
    </location>
</feature>
<feature type="binding site" evidence="1">
    <location>
        <begin position="109"/>
        <end position="116"/>
    </location>
    <ligand>
        <name>GTP</name>
        <dbReference type="ChEBI" id="CHEBI:37565"/>
    </ligand>
</feature>
<feature type="binding site" evidence="1">
    <location>
        <begin position="191"/>
        <end position="195"/>
    </location>
    <ligand>
        <name>GTP</name>
        <dbReference type="ChEBI" id="CHEBI:37565"/>
    </ligand>
</feature>
<feature type="binding site" evidence="1">
    <location>
        <begin position="249"/>
        <end position="252"/>
    </location>
    <ligand>
        <name>GTP</name>
        <dbReference type="ChEBI" id="CHEBI:37565"/>
    </ligand>
</feature>
<reference key="1">
    <citation type="journal article" date="1998" name="Nature">
        <title>The genome sequence of Rickettsia prowazekii and the origin of mitochondria.</title>
        <authorList>
            <person name="Andersson S.G.E."/>
            <person name="Zomorodipour A."/>
            <person name="Andersson J.O."/>
            <person name="Sicheritz-Ponten T."/>
            <person name="Alsmark U.C.M."/>
            <person name="Podowski R.M."/>
            <person name="Naeslund A.K."/>
            <person name="Eriksson A.-S."/>
            <person name="Winkler H.H."/>
            <person name="Kurland C.G."/>
        </authorList>
    </citation>
    <scope>NUCLEOTIDE SEQUENCE [LARGE SCALE GENOMIC DNA]</scope>
    <source>
        <strain>Madrid E</strain>
    </source>
</reference>
<comment type="function">
    <text evidence="1">Involved in targeting and insertion of nascent membrane proteins into the cytoplasmic membrane. Binds to the hydrophobic signal sequence of the ribosome-nascent chain (RNC) as it emerges from the ribosomes. The SRP-RNC complex is then targeted to the cytoplasmic membrane where it interacts with the SRP receptor FtsY. Interaction with FtsY leads to the transfer of the RNC complex to the Sec translocase for insertion into the membrane, the hydrolysis of GTP by both Ffh and FtsY, and the dissociation of the SRP-FtsY complex into the individual components.</text>
</comment>
<comment type="catalytic activity">
    <reaction evidence="1">
        <text>GTP + H2O = GDP + phosphate + H(+)</text>
        <dbReference type="Rhea" id="RHEA:19669"/>
        <dbReference type="ChEBI" id="CHEBI:15377"/>
        <dbReference type="ChEBI" id="CHEBI:15378"/>
        <dbReference type="ChEBI" id="CHEBI:37565"/>
        <dbReference type="ChEBI" id="CHEBI:43474"/>
        <dbReference type="ChEBI" id="CHEBI:58189"/>
        <dbReference type="EC" id="3.6.5.4"/>
    </reaction>
</comment>
<comment type="subunit">
    <text evidence="1">Part of the signal recognition particle protein translocation system, which is composed of SRP and FtsY. SRP is a ribonucleoprotein composed of Ffh and a 4.5S RNA molecule.</text>
</comment>
<comment type="subcellular location">
    <subcellularLocation>
        <location evidence="1">Cytoplasm</location>
    </subcellularLocation>
    <text evidence="1">The SRP-RNC complex is targeted to the cytoplasmic membrane.</text>
</comment>
<comment type="domain">
    <text evidence="1">Composed of three domains: the N-terminal N domain, which is responsible for interactions with the ribosome, the central G domain, which binds GTP, and the C-terminal M domain, which binds the RNA and the signal sequence of the RNC.</text>
</comment>
<comment type="similarity">
    <text evidence="1">Belongs to the GTP-binding SRP family. SRP54 subfamily.</text>
</comment>
<protein>
    <recommendedName>
        <fullName evidence="1">Signal recognition particle protein</fullName>
        <ecNumber evidence="1">3.6.5.4</ecNumber>
    </recommendedName>
    <alternativeName>
        <fullName evidence="1">Fifty-four homolog</fullName>
    </alternativeName>
</protein>